<comment type="function">
    <text evidence="1">Monomeric heme protein which primary function is to store oxygen and facilitate its diffusion within muscle tissues. Reversibly binds oxygen through a pentacoordinated heme iron and enables its timely and efficient release as needed during periods of heightened demand. Depending on the oxidative conditions of tissues and cells, and in addition to its ability to bind oxygen, it also has a nitrite reductase activity whereby it regulates the production of bioactive nitric oxide. Under stress conditions, like hypoxia and anoxia, it also protects cells against reactive oxygen species thanks to its pseudoperoxidase activity.</text>
</comment>
<comment type="catalytic activity">
    <reaction evidence="1">
        <text>Fe(III)-heme b-[protein] + nitric oxide + H2O = Fe(II)-heme b-[protein] + nitrite + 2 H(+)</text>
        <dbReference type="Rhea" id="RHEA:77711"/>
        <dbReference type="Rhea" id="RHEA-COMP:18975"/>
        <dbReference type="Rhea" id="RHEA-COMP:18976"/>
        <dbReference type="ChEBI" id="CHEBI:15377"/>
        <dbReference type="ChEBI" id="CHEBI:15378"/>
        <dbReference type="ChEBI" id="CHEBI:16301"/>
        <dbReference type="ChEBI" id="CHEBI:16480"/>
        <dbReference type="ChEBI" id="CHEBI:55376"/>
        <dbReference type="ChEBI" id="CHEBI:60344"/>
    </reaction>
    <physiologicalReaction direction="right-to-left" evidence="1">
        <dbReference type="Rhea" id="RHEA:77713"/>
    </physiologicalReaction>
</comment>
<comment type="catalytic activity">
    <reaction evidence="1">
        <text>H2O2 + AH2 = A + 2 H2O</text>
        <dbReference type="Rhea" id="RHEA:30275"/>
        <dbReference type="ChEBI" id="CHEBI:13193"/>
        <dbReference type="ChEBI" id="CHEBI:15377"/>
        <dbReference type="ChEBI" id="CHEBI:16240"/>
        <dbReference type="ChEBI" id="CHEBI:17499"/>
    </reaction>
</comment>
<comment type="subunit">
    <text evidence="2">Monomeric.</text>
</comment>
<comment type="subcellular location">
    <subcellularLocation>
        <location evidence="1">Cytoplasm</location>
        <location evidence="1">Sarcoplasm</location>
    </subcellularLocation>
</comment>
<comment type="similarity">
    <text evidence="7">Belongs to the globin family.</text>
</comment>
<protein>
    <recommendedName>
        <fullName>Myoglobin</fullName>
    </recommendedName>
    <alternativeName>
        <fullName evidence="1">Nitrite reductase MB</fullName>
        <ecNumber evidence="1">1.7.-.-</ecNumber>
    </alternativeName>
    <alternativeName>
        <fullName evidence="1">Pseudoperoxidase MB</fullName>
        <ecNumber evidence="1">1.11.1.-</ecNumber>
    </alternativeName>
</protein>
<feature type="initiator methionine" description="Removed" evidence="8">
    <location>
        <position position="1"/>
    </location>
</feature>
<feature type="chain" id="PRO_0000053326" description="Myoglobin">
    <location>
        <begin position="2"/>
        <end position="154"/>
    </location>
</feature>
<feature type="domain" description="Globin" evidence="7">
    <location>
        <begin position="2"/>
        <end position="148"/>
    </location>
</feature>
<feature type="binding site" evidence="5">
    <location>
        <position position="65"/>
    </location>
    <ligand>
        <name>nitrite</name>
        <dbReference type="ChEBI" id="CHEBI:16301"/>
    </ligand>
</feature>
<feature type="binding site" evidence="3 7">
    <location>
        <position position="65"/>
    </location>
    <ligand>
        <name>O2</name>
        <dbReference type="ChEBI" id="CHEBI:15379"/>
    </ligand>
</feature>
<feature type="binding site" description="proximal binding residue" evidence="1">
    <location>
        <position position="94"/>
    </location>
    <ligand>
        <name>heme b</name>
        <dbReference type="ChEBI" id="CHEBI:60344"/>
    </ligand>
    <ligandPart>
        <name>Fe</name>
        <dbReference type="ChEBI" id="CHEBI:18248"/>
    </ligandPart>
</feature>
<feature type="modified residue" description="Phosphoserine" evidence="6">
    <location>
        <position position="4"/>
    </location>
</feature>
<feature type="modified residue" description="Phosphothreonine" evidence="4">
    <location>
        <position position="68"/>
    </location>
</feature>
<name>MYG_ORYAF</name>
<dbReference type="EC" id="1.7.-.-" evidence="1"/>
<dbReference type="EC" id="1.11.1.-" evidence="1"/>
<dbReference type="PIR" id="A02482">
    <property type="entry name" value="MYOY"/>
</dbReference>
<dbReference type="SMR" id="P02164"/>
<dbReference type="GO" id="GO:0070062">
    <property type="term" value="C:extracellular exosome"/>
    <property type="evidence" value="ECO:0007669"/>
    <property type="project" value="TreeGrafter"/>
</dbReference>
<dbReference type="GO" id="GO:0016528">
    <property type="term" value="C:sarcoplasm"/>
    <property type="evidence" value="ECO:0000250"/>
    <property type="project" value="UniProtKB"/>
</dbReference>
<dbReference type="GO" id="GO:0020037">
    <property type="term" value="F:heme binding"/>
    <property type="evidence" value="ECO:0007669"/>
    <property type="project" value="InterPro"/>
</dbReference>
<dbReference type="GO" id="GO:0046872">
    <property type="term" value="F:metal ion binding"/>
    <property type="evidence" value="ECO:0007669"/>
    <property type="project" value="UniProtKB-KW"/>
</dbReference>
<dbReference type="GO" id="GO:0098809">
    <property type="term" value="F:nitrite reductase activity"/>
    <property type="evidence" value="ECO:0000250"/>
    <property type="project" value="UniProtKB"/>
</dbReference>
<dbReference type="GO" id="GO:0019825">
    <property type="term" value="F:oxygen binding"/>
    <property type="evidence" value="ECO:0007669"/>
    <property type="project" value="InterPro"/>
</dbReference>
<dbReference type="GO" id="GO:0005344">
    <property type="term" value="F:oxygen carrier activity"/>
    <property type="evidence" value="ECO:0000250"/>
    <property type="project" value="UniProtKB"/>
</dbReference>
<dbReference type="GO" id="GO:0004601">
    <property type="term" value="F:peroxidase activity"/>
    <property type="evidence" value="ECO:0000250"/>
    <property type="project" value="UniProtKB"/>
</dbReference>
<dbReference type="GO" id="GO:0019430">
    <property type="term" value="P:removal of superoxide radicals"/>
    <property type="evidence" value="ECO:0000250"/>
    <property type="project" value="UniProtKB"/>
</dbReference>
<dbReference type="CDD" id="cd08926">
    <property type="entry name" value="Mb"/>
    <property type="match status" value="1"/>
</dbReference>
<dbReference type="Gene3D" id="6.10.140.2100">
    <property type="match status" value="1"/>
</dbReference>
<dbReference type="Gene3D" id="6.10.140.2110">
    <property type="match status" value="1"/>
</dbReference>
<dbReference type="InterPro" id="IPR000971">
    <property type="entry name" value="Globin"/>
</dbReference>
<dbReference type="InterPro" id="IPR009050">
    <property type="entry name" value="Globin-like_sf"/>
</dbReference>
<dbReference type="InterPro" id="IPR002335">
    <property type="entry name" value="Myoglobin"/>
</dbReference>
<dbReference type="PANTHER" id="PTHR47132">
    <property type="entry name" value="MYOGLOBIN"/>
    <property type="match status" value="1"/>
</dbReference>
<dbReference type="PANTHER" id="PTHR47132:SF1">
    <property type="entry name" value="MYOGLOBIN"/>
    <property type="match status" value="1"/>
</dbReference>
<dbReference type="Pfam" id="PF00042">
    <property type="entry name" value="Globin"/>
    <property type="match status" value="1"/>
</dbReference>
<dbReference type="PRINTS" id="PR00613">
    <property type="entry name" value="MYOGLOBIN"/>
</dbReference>
<dbReference type="SUPFAM" id="SSF46458">
    <property type="entry name" value="Globin-like"/>
    <property type="match status" value="1"/>
</dbReference>
<dbReference type="PROSITE" id="PS01033">
    <property type="entry name" value="GLOBIN"/>
    <property type="match status" value="1"/>
</dbReference>
<accession>P02164</accession>
<reference key="1">
    <citation type="journal article" date="1983" name="Hoppe-Seyler's Z. Physiol. Chem.">
        <title>The phylogenetic position of aardvark (Orycteropus afer) as suggested by its myoglobin.</title>
        <authorList>
            <person name="Dene H."/>
            <person name="Goodman M."/>
            <person name="Walz D.A."/>
            <person name="Romero-Herrera A.E."/>
        </authorList>
    </citation>
    <scope>PROTEIN SEQUENCE OF 2-154</scope>
</reference>
<sequence>MGLSDAEWQLVLNVWGKVEADIPGHGQDVLIRLFKGHPETLEKFDRFKHLKTEDEMKASEDLKKHGTTVLTALGGILKKKGQHEAEIQPLAQSHATKHKIPVKYLEFISEAIIQVIQSKHSGDFGADAQGAMSKALELFRNDIAAKYKELGFQG</sequence>
<keyword id="KW-0963">Cytoplasm</keyword>
<keyword id="KW-0903">Direct protein sequencing</keyword>
<keyword id="KW-0349">Heme</keyword>
<keyword id="KW-0408">Iron</keyword>
<keyword id="KW-0479">Metal-binding</keyword>
<keyword id="KW-0514">Muscle protein</keyword>
<keyword id="KW-0560">Oxidoreductase</keyword>
<keyword id="KW-0561">Oxygen transport</keyword>
<keyword id="KW-0597">Phosphoprotein</keyword>
<keyword id="KW-0813">Transport</keyword>
<proteinExistence type="evidence at protein level"/>
<organism>
    <name type="scientific">Orycteropus afer</name>
    <name type="common">Aardvark</name>
    <dbReference type="NCBI Taxonomy" id="9818"/>
    <lineage>
        <taxon>Eukaryota</taxon>
        <taxon>Metazoa</taxon>
        <taxon>Chordata</taxon>
        <taxon>Craniata</taxon>
        <taxon>Vertebrata</taxon>
        <taxon>Euteleostomi</taxon>
        <taxon>Mammalia</taxon>
        <taxon>Eutheria</taxon>
        <taxon>Afrotheria</taxon>
        <taxon>Tubulidentata</taxon>
        <taxon>Orycteropodidae</taxon>
        <taxon>Orycteropus</taxon>
    </lineage>
</organism>
<gene>
    <name type="primary">MB</name>
</gene>
<evidence type="ECO:0000250" key="1">
    <source>
        <dbReference type="UniProtKB" id="P02144"/>
    </source>
</evidence>
<evidence type="ECO:0000250" key="2">
    <source>
        <dbReference type="UniProtKB" id="P02185"/>
    </source>
</evidence>
<evidence type="ECO:0000250" key="3">
    <source>
        <dbReference type="UniProtKB" id="P02189"/>
    </source>
</evidence>
<evidence type="ECO:0000250" key="4">
    <source>
        <dbReference type="UniProtKB" id="P04247"/>
    </source>
</evidence>
<evidence type="ECO:0000250" key="5">
    <source>
        <dbReference type="UniProtKB" id="P68082"/>
    </source>
</evidence>
<evidence type="ECO:0000250" key="6">
    <source>
        <dbReference type="UniProtKB" id="Q9QZ76"/>
    </source>
</evidence>
<evidence type="ECO:0000255" key="7">
    <source>
        <dbReference type="PROSITE-ProRule" id="PRU00238"/>
    </source>
</evidence>
<evidence type="ECO:0000269" key="8">
    <source>
    </source>
</evidence>